<reference key="1">
    <citation type="journal article" date="2005" name="Nature">
        <title>Genomic sequence of the pathogenic and allergenic filamentous fungus Aspergillus fumigatus.</title>
        <authorList>
            <person name="Nierman W.C."/>
            <person name="Pain A."/>
            <person name="Anderson M.J."/>
            <person name="Wortman J.R."/>
            <person name="Kim H.S."/>
            <person name="Arroyo J."/>
            <person name="Berriman M."/>
            <person name="Abe K."/>
            <person name="Archer D.B."/>
            <person name="Bermejo C."/>
            <person name="Bennett J.W."/>
            <person name="Bowyer P."/>
            <person name="Chen D."/>
            <person name="Collins M."/>
            <person name="Coulsen R."/>
            <person name="Davies R."/>
            <person name="Dyer P.S."/>
            <person name="Farman M.L."/>
            <person name="Fedorova N."/>
            <person name="Fedorova N.D."/>
            <person name="Feldblyum T.V."/>
            <person name="Fischer R."/>
            <person name="Fosker N."/>
            <person name="Fraser A."/>
            <person name="Garcia J.L."/>
            <person name="Garcia M.J."/>
            <person name="Goble A."/>
            <person name="Goldman G.H."/>
            <person name="Gomi K."/>
            <person name="Griffith-Jones S."/>
            <person name="Gwilliam R."/>
            <person name="Haas B.J."/>
            <person name="Haas H."/>
            <person name="Harris D.E."/>
            <person name="Horiuchi H."/>
            <person name="Huang J."/>
            <person name="Humphray S."/>
            <person name="Jimenez J."/>
            <person name="Keller N."/>
            <person name="Khouri H."/>
            <person name="Kitamoto K."/>
            <person name="Kobayashi T."/>
            <person name="Konzack S."/>
            <person name="Kulkarni R."/>
            <person name="Kumagai T."/>
            <person name="Lafton A."/>
            <person name="Latge J.-P."/>
            <person name="Li W."/>
            <person name="Lord A."/>
            <person name="Lu C."/>
            <person name="Majoros W.H."/>
            <person name="May G.S."/>
            <person name="Miller B.L."/>
            <person name="Mohamoud Y."/>
            <person name="Molina M."/>
            <person name="Monod M."/>
            <person name="Mouyna I."/>
            <person name="Mulligan S."/>
            <person name="Murphy L.D."/>
            <person name="O'Neil S."/>
            <person name="Paulsen I."/>
            <person name="Penalva M.A."/>
            <person name="Pertea M."/>
            <person name="Price C."/>
            <person name="Pritchard B.L."/>
            <person name="Quail M.A."/>
            <person name="Rabbinowitsch E."/>
            <person name="Rawlins N."/>
            <person name="Rajandream M.A."/>
            <person name="Reichard U."/>
            <person name="Renauld H."/>
            <person name="Robson G.D."/>
            <person name="Rodriguez de Cordoba S."/>
            <person name="Rodriguez-Pena J.M."/>
            <person name="Ronning C.M."/>
            <person name="Rutter S."/>
            <person name="Salzberg S.L."/>
            <person name="Sanchez M."/>
            <person name="Sanchez-Ferrero J.C."/>
            <person name="Saunders D."/>
            <person name="Seeger K."/>
            <person name="Squares R."/>
            <person name="Squares S."/>
            <person name="Takeuchi M."/>
            <person name="Tekaia F."/>
            <person name="Turner G."/>
            <person name="Vazquez de Aldana C.R."/>
            <person name="Weidman J."/>
            <person name="White O."/>
            <person name="Woodward J.R."/>
            <person name="Yu J.-H."/>
            <person name="Fraser C.M."/>
            <person name="Galagan J.E."/>
            <person name="Asai K."/>
            <person name="Machida M."/>
            <person name="Hall N."/>
            <person name="Barrell B.G."/>
            <person name="Denning D.W."/>
        </authorList>
    </citation>
    <scope>NUCLEOTIDE SEQUENCE [LARGE SCALE GENOMIC DNA]</scope>
    <source>
        <strain>ATCC MYA-4609 / CBS 101355 / FGSC A1100 / Af293</strain>
    </source>
</reference>
<reference key="2">
    <citation type="journal article" date="2005" name="Med. Mycol.">
        <title>The ergosterol biosynthesis pathway, transporter genes, and azole resistance in Aspergillus fumigatus.</title>
        <authorList>
            <person name="Ferreira M.E."/>
            <person name="Colombo A.L."/>
            <person name="Paulsen I."/>
            <person name="Ren Q."/>
            <person name="Wortman J."/>
            <person name="Huang J."/>
            <person name="Goldman M.H."/>
            <person name="Goldman G.H."/>
        </authorList>
    </citation>
    <scope>IDENTIFICATION</scope>
    <scope>FUNCTION</scope>
</reference>
<reference key="3">
    <citation type="journal article" date="2012" name="Proc. Natl. Acad. Sci. U.S.A.">
        <title>Mevalonate governs interdependency of ergosterol and siderophore biosyntheses in the fungal pathogen Aspergillus fumigatus.</title>
        <authorList>
            <person name="Yasmin S."/>
            <person name="Alcazar-Fuoli L."/>
            <person name="Gruendlinger M."/>
            <person name="Puempel T."/>
            <person name="Cairns T."/>
            <person name="Blatzer M."/>
            <person name="Lopez J.F."/>
            <person name="Grimalt J.O."/>
            <person name="Bignell E."/>
            <person name="Haas H."/>
        </authorList>
    </citation>
    <scope>FUNCTION</scope>
</reference>
<evidence type="ECO:0000250" key="1">
    <source>
        <dbReference type="UniProtKB" id="O23722"/>
    </source>
</evidence>
<evidence type="ECO:0000250" key="2">
    <source>
        <dbReference type="UniProtKB" id="P32377"/>
    </source>
</evidence>
<evidence type="ECO:0000303" key="3">
    <source>
    </source>
</evidence>
<evidence type="ECO:0000305" key="4"/>
<evidence type="ECO:0000305" key="5">
    <source>
    </source>
</evidence>
<evidence type="ECO:0000305" key="6">
    <source>
    </source>
</evidence>
<accession>Q4WNV9</accession>
<organism>
    <name type="scientific">Aspergillus fumigatus (strain ATCC MYA-4609 / CBS 101355 / FGSC A1100 / Af293)</name>
    <name type="common">Neosartorya fumigata</name>
    <dbReference type="NCBI Taxonomy" id="330879"/>
    <lineage>
        <taxon>Eukaryota</taxon>
        <taxon>Fungi</taxon>
        <taxon>Dikarya</taxon>
        <taxon>Ascomycota</taxon>
        <taxon>Pezizomycotina</taxon>
        <taxon>Eurotiomycetes</taxon>
        <taxon>Eurotiomycetidae</taxon>
        <taxon>Eurotiales</taxon>
        <taxon>Aspergillaceae</taxon>
        <taxon>Aspergillus</taxon>
        <taxon>Aspergillus subgen. Fumigati</taxon>
    </lineage>
</organism>
<comment type="function">
    <text evidence="2 5 6">Diphosphomevalonate decarboxylase; part of the second module of ergosterol biosynthesis pathway that includes the middle steps of the pathway (By similarity). Mvd1 converts diphosphomevalonate into isopentenyl diphosphate (By similarity). The second module is carried out in the vacuole and involves the formation of farnesyl diphosphate, which is also an important intermediate in the biosynthesis of ubiquinone, dolichol, heme and prenylated proteins. Activity by the mevalonate kinase erg12 (AFUA_4G07780) first converts mevalonate into 5-phosphomevalonate. 5-phosphomevalonate is then further converted to 5-diphosphomevalonate by the phosphomevalonate kinase erg8 (AFUA_5G10680). The diphosphomevalonate decarboxylase mvd1 (AFUA_4G07130) then produces isopentenyl diphosphate. The isopentenyl-diphosphate delta-isomerase idi1 (AFUA_6G11160) then catalyzes the 1,3-allylic rearrangement of the homoallylic substrate isopentenyl (IPP) to its highly electrophilic allylic isomer, dimethylallyl diphosphate (DMAPP). Finally the farnesyl diphosphate synthase erg20 (AFUA_5G02450) catalyzes the sequential condensation of isopentenyl pyrophosphate with dimethylallyl pyrophosphate, and then with the resultant geranylpyrophosphate to the ultimate product farnesyl pyrophosphate (Probable) (PubMed:16110826, PubMed:22106303).</text>
</comment>
<comment type="catalytic activity">
    <reaction evidence="5">
        <text>(R)-5-diphosphomevalonate + ATP = isopentenyl diphosphate + ADP + phosphate + CO2</text>
        <dbReference type="Rhea" id="RHEA:23732"/>
        <dbReference type="ChEBI" id="CHEBI:16526"/>
        <dbReference type="ChEBI" id="CHEBI:30616"/>
        <dbReference type="ChEBI" id="CHEBI:43474"/>
        <dbReference type="ChEBI" id="CHEBI:57557"/>
        <dbReference type="ChEBI" id="CHEBI:128769"/>
        <dbReference type="ChEBI" id="CHEBI:456216"/>
        <dbReference type="EC" id="4.1.1.33"/>
    </reaction>
    <physiologicalReaction direction="left-to-right" evidence="5">
        <dbReference type="Rhea" id="RHEA:23733"/>
    </physiologicalReaction>
</comment>
<comment type="pathway">
    <text evidence="5">Isoprenoid biosynthesis; isopentenyl diphosphate biosynthesis via mevalonate pathway; isopentenyl diphosphate from (R)-mevalonate: step 3/3.</text>
</comment>
<comment type="subunit">
    <text evidence="2">Homodimer.</text>
</comment>
<comment type="similarity">
    <text evidence="4">Belongs to the diphosphomevalonate decarboxylase family.</text>
</comment>
<feature type="chain" id="PRO_0000454154" description="Diphosphomevalonate decarboxylase mvd1">
    <location>
        <begin position="1"/>
        <end position="404"/>
    </location>
</feature>
<feature type="binding site" evidence="1">
    <location>
        <begin position="25"/>
        <end position="28"/>
    </location>
    <ligand>
        <name>(R)-5-diphosphomevalonate</name>
        <dbReference type="ChEBI" id="CHEBI:57557"/>
    </ligand>
</feature>
<feature type="binding site" evidence="1">
    <location>
        <position position="82"/>
    </location>
    <ligand>
        <name>(R)-5-diphosphomevalonate</name>
        <dbReference type="ChEBI" id="CHEBI:57557"/>
    </ligand>
</feature>
<feature type="binding site" evidence="1">
    <location>
        <begin position="161"/>
        <end position="166"/>
    </location>
    <ligand>
        <name>(R)-5-diphosphomevalonate</name>
        <dbReference type="ChEBI" id="CHEBI:57557"/>
    </ligand>
</feature>
<feature type="binding site" evidence="1">
    <location>
        <position position="217"/>
    </location>
    <ligand>
        <name>(R)-5-diphosphomevalonate</name>
        <dbReference type="ChEBI" id="CHEBI:57557"/>
    </ligand>
</feature>
<sequence>MAATSDRTVYRATTTAPVNIAVIKYWGKRDASLNLPTNSSLSVTLSQRSLRTLTTASCSAIYPAADELILNGKPQDIQTSKRTLACLSNLRSLRQALENADPSLPKLSTLPLRIVSENNFPTAAGLASSAAGFAALVRAVADLYQLPQSPLELSRIARQGSGSACRSLMGGYVAWRAGEREDGSDSLAEEVAPASHWPEMRAIILVVSAEKKDVPSTEGMQTTVATSSLFATRAASVVPERMAAIETAIQNKDFATFAEITMRDSNSFHATCLDSWPPIFYMNDVSRAAVRLVHDINRAVGRTVCAYTFDAGPNAVIYYLEKDSEVVAGTIKAILGPNTEGFDGPFYDILKNVTASVVPLEKVDSRAVEILKNGISRVILTGVGEGPISVEDHLVSATGDILAS</sequence>
<gene>
    <name evidence="3" type="primary">mvd1</name>
    <name type="ORF">AFUA_4G07130</name>
</gene>
<keyword id="KW-0067">ATP-binding</keyword>
<keyword id="KW-0444">Lipid biosynthesis</keyword>
<keyword id="KW-0443">Lipid metabolism</keyword>
<keyword id="KW-0456">Lyase</keyword>
<keyword id="KW-0547">Nucleotide-binding</keyword>
<keyword id="KW-1185">Reference proteome</keyword>
<keyword id="KW-0752">Steroid biosynthesis</keyword>
<keyword id="KW-0753">Steroid metabolism</keyword>
<keyword id="KW-0756">Sterol biosynthesis</keyword>
<keyword id="KW-1207">Sterol metabolism</keyword>
<protein>
    <recommendedName>
        <fullName evidence="3">Diphosphomevalonate decarboxylase mvd1</fullName>
        <ecNumber evidence="5">4.1.1.33</ecNumber>
    </recommendedName>
    <alternativeName>
        <fullName evidence="3">Ergosterol biosynthesis protein mvd1</fullName>
    </alternativeName>
    <alternativeName>
        <fullName evidence="3">Mevalonate pyrophosphate decarboxylase</fullName>
    </alternativeName>
    <alternativeName>
        <fullName evidence="3">Mevalonate-5-diphosphate decarboxylase</fullName>
        <shortName evidence="3">MDDase</shortName>
    </alternativeName>
</protein>
<dbReference type="EC" id="4.1.1.33" evidence="5"/>
<dbReference type="EMBL" id="AAHF01000005">
    <property type="protein sequence ID" value="EAL90075.1"/>
    <property type="molecule type" value="Genomic_DNA"/>
</dbReference>
<dbReference type="RefSeq" id="XP_752113.1">
    <property type="nucleotide sequence ID" value="XM_747020.1"/>
</dbReference>
<dbReference type="SMR" id="Q4WNV9"/>
<dbReference type="FunCoup" id="Q4WNV9">
    <property type="interactions" value="675"/>
</dbReference>
<dbReference type="STRING" id="330879.Q4WNV9"/>
<dbReference type="EnsemblFungi" id="EAL90075">
    <property type="protein sequence ID" value="EAL90075"/>
    <property type="gene ID" value="AFUA_4G07130"/>
</dbReference>
<dbReference type="GeneID" id="3509586"/>
<dbReference type="KEGG" id="afm:AFUA_4G07130"/>
<dbReference type="VEuPathDB" id="FungiDB:Afu4g07130"/>
<dbReference type="eggNOG" id="KOG2833">
    <property type="taxonomic scope" value="Eukaryota"/>
</dbReference>
<dbReference type="HOGENOM" id="CLU_040369_4_2_1"/>
<dbReference type="InParanoid" id="Q4WNV9"/>
<dbReference type="OMA" id="LTLHAMM"/>
<dbReference type="OrthoDB" id="10253702at2759"/>
<dbReference type="UniPathway" id="UPA00057">
    <property type="reaction ID" value="UER00100"/>
</dbReference>
<dbReference type="Proteomes" id="UP000002530">
    <property type="component" value="Chromosome 4"/>
</dbReference>
<dbReference type="GO" id="GO:0005829">
    <property type="term" value="C:cytosol"/>
    <property type="evidence" value="ECO:0000318"/>
    <property type="project" value="GO_Central"/>
</dbReference>
<dbReference type="GO" id="GO:0005524">
    <property type="term" value="F:ATP binding"/>
    <property type="evidence" value="ECO:0007669"/>
    <property type="project" value="UniProtKB-KW"/>
</dbReference>
<dbReference type="GO" id="GO:0004163">
    <property type="term" value="F:diphosphomevalonate decarboxylase activity"/>
    <property type="evidence" value="ECO:0000318"/>
    <property type="project" value="GO_Central"/>
</dbReference>
<dbReference type="GO" id="GO:0006696">
    <property type="term" value="P:ergosterol biosynthetic process"/>
    <property type="evidence" value="ECO:0007669"/>
    <property type="project" value="EnsemblFungi"/>
</dbReference>
<dbReference type="GO" id="GO:0019287">
    <property type="term" value="P:isopentenyl diphosphate biosynthetic process, mevalonate pathway"/>
    <property type="evidence" value="ECO:0000318"/>
    <property type="project" value="GO_Central"/>
</dbReference>
<dbReference type="FunFam" id="3.30.230.10:FF:000018">
    <property type="entry name" value="Diphosphomevalonate decarboxylase"/>
    <property type="match status" value="1"/>
</dbReference>
<dbReference type="FunFam" id="3.30.70.890:FF:000005">
    <property type="entry name" value="Diphosphomevalonate decarboxylase"/>
    <property type="match status" value="1"/>
</dbReference>
<dbReference type="Gene3D" id="3.30.230.10">
    <property type="match status" value="1"/>
</dbReference>
<dbReference type="Gene3D" id="3.30.70.890">
    <property type="entry name" value="GHMP kinase, C-terminal domain"/>
    <property type="match status" value="1"/>
</dbReference>
<dbReference type="InterPro" id="IPR036554">
    <property type="entry name" value="GHMP_kinase_C_sf"/>
</dbReference>
<dbReference type="InterPro" id="IPR005935">
    <property type="entry name" value="Mev_decarb"/>
</dbReference>
<dbReference type="InterPro" id="IPR029765">
    <property type="entry name" value="Mev_diP_decarb"/>
</dbReference>
<dbReference type="InterPro" id="IPR053859">
    <property type="entry name" value="MVD-like_N"/>
</dbReference>
<dbReference type="InterPro" id="IPR041431">
    <property type="entry name" value="Mvd1_C"/>
</dbReference>
<dbReference type="InterPro" id="IPR020568">
    <property type="entry name" value="Ribosomal_Su5_D2-typ_SF"/>
</dbReference>
<dbReference type="InterPro" id="IPR014721">
    <property type="entry name" value="Ribsml_uS5_D2-typ_fold_subgr"/>
</dbReference>
<dbReference type="NCBIfam" id="TIGR01240">
    <property type="entry name" value="mevDPdecarb"/>
    <property type="match status" value="1"/>
</dbReference>
<dbReference type="PANTHER" id="PTHR10977">
    <property type="entry name" value="DIPHOSPHOMEVALONATE DECARBOXYLASE"/>
    <property type="match status" value="1"/>
</dbReference>
<dbReference type="PANTHER" id="PTHR10977:SF3">
    <property type="entry name" value="DIPHOSPHOMEVALONATE DECARBOXYLASE"/>
    <property type="match status" value="1"/>
</dbReference>
<dbReference type="Pfam" id="PF18376">
    <property type="entry name" value="MDD_C"/>
    <property type="match status" value="1"/>
</dbReference>
<dbReference type="Pfam" id="PF22700">
    <property type="entry name" value="MVD-like_N"/>
    <property type="match status" value="1"/>
</dbReference>
<dbReference type="PIRSF" id="PIRSF015950">
    <property type="entry name" value="Mev_P_decrbx"/>
    <property type="match status" value="1"/>
</dbReference>
<dbReference type="SUPFAM" id="SSF55060">
    <property type="entry name" value="GHMP Kinase, C-terminal domain"/>
    <property type="match status" value="1"/>
</dbReference>
<dbReference type="SUPFAM" id="SSF54211">
    <property type="entry name" value="Ribosomal protein S5 domain 2-like"/>
    <property type="match status" value="1"/>
</dbReference>
<proteinExistence type="inferred from homology"/>
<name>MVD1_ASPFU</name>